<name>IF1_ACTP2</name>
<reference key="1">
    <citation type="journal article" date="2008" name="J. Bacteriol.">
        <title>The complete genome sequence of Actinobacillus pleuropneumoniae L20 (serotype 5b).</title>
        <authorList>
            <person name="Foote S.J."/>
            <person name="Bosse J.T."/>
            <person name="Bouevitch A.B."/>
            <person name="Langford P.R."/>
            <person name="Young N.M."/>
            <person name="Nash J.H.E."/>
        </authorList>
    </citation>
    <scope>NUCLEOTIDE SEQUENCE [LARGE SCALE GENOMIC DNA]</scope>
    <source>
        <strain>L20</strain>
    </source>
</reference>
<evidence type="ECO:0000255" key="1">
    <source>
        <dbReference type="HAMAP-Rule" id="MF_00075"/>
    </source>
</evidence>
<keyword id="KW-0963">Cytoplasm</keyword>
<keyword id="KW-0396">Initiation factor</keyword>
<keyword id="KW-0648">Protein biosynthesis</keyword>
<keyword id="KW-1185">Reference proteome</keyword>
<keyword id="KW-0694">RNA-binding</keyword>
<keyword id="KW-0699">rRNA-binding</keyword>
<sequence>MAKEDCIEMQGTILETLPNTMFRVELENGHVVTAHISGKMRKNYIRILTGDKVTVEMTPYDLSKARIIFRAR</sequence>
<protein>
    <recommendedName>
        <fullName evidence="1">Translation initiation factor IF-1</fullName>
    </recommendedName>
</protein>
<proteinExistence type="inferred from homology"/>
<accession>A3N1M8</accession>
<gene>
    <name evidence="1" type="primary">infA</name>
    <name type="ordered locus">APL_1228</name>
</gene>
<dbReference type="EMBL" id="CP000569">
    <property type="protein sequence ID" value="ABN74314.1"/>
    <property type="molecule type" value="Genomic_DNA"/>
</dbReference>
<dbReference type="RefSeq" id="WP_005598198.1">
    <property type="nucleotide sequence ID" value="NC_009053.1"/>
</dbReference>
<dbReference type="SMR" id="A3N1M8"/>
<dbReference type="STRING" id="416269.APL_1228"/>
<dbReference type="EnsemblBacteria" id="ABN74314">
    <property type="protein sequence ID" value="ABN74314"/>
    <property type="gene ID" value="APL_1228"/>
</dbReference>
<dbReference type="GeneID" id="92744256"/>
<dbReference type="KEGG" id="apl:APL_1228"/>
<dbReference type="eggNOG" id="COG0361">
    <property type="taxonomic scope" value="Bacteria"/>
</dbReference>
<dbReference type="HOGENOM" id="CLU_151267_1_0_6"/>
<dbReference type="Proteomes" id="UP000001432">
    <property type="component" value="Chromosome"/>
</dbReference>
<dbReference type="GO" id="GO:0005829">
    <property type="term" value="C:cytosol"/>
    <property type="evidence" value="ECO:0007669"/>
    <property type="project" value="TreeGrafter"/>
</dbReference>
<dbReference type="GO" id="GO:0043022">
    <property type="term" value="F:ribosome binding"/>
    <property type="evidence" value="ECO:0007669"/>
    <property type="project" value="UniProtKB-UniRule"/>
</dbReference>
<dbReference type="GO" id="GO:0019843">
    <property type="term" value="F:rRNA binding"/>
    <property type="evidence" value="ECO:0007669"/>
    <property type="project" value="UniProtKB-UniRule"/>
</dbReference>
<dbReference type="GO" id="GO:0003743">
    <property type="term" value="F:translation initiation factor activity"/>
    <property type="evidence" value="ECO:0007669"/>
    <property type="project" value="UniProtKB-UniRule"/>
</dbReference>
<dbReference type="CDD" id="cd04451">
    <property type="entry name" value="S1_IF1"/>
    <property type="match status" value="1"/>
</dbReference>
<dbReference type="FunFam" id="2.40.50.140:FF:000002">
    <property type="entry name" value="Translation initiation factor IF-1"/>
    <property type="match status" value="1"/>
</dbReference>
<dbReference type="Gene3D" id="2.40.50.140">
    <property type="entry name" value="Nucleic acid-binding proteins"/>
    <property type="match status" value="1"/>
</dbReference>
<dbReference type="HAMAP" id="MF_00075">
    <property type="entry name" value="IF_1"/>
    <property type="match status" value="1"/>
</dbReference>
<dbReference type="InterPro" id="IPR012340">
    <property type="entry name" value="NA-bd_OB-fold"/>
</dbReference>
<dbReference type="InterPro" id="IPR006196">
    <property type="entry name" value="RNA-binding_domain_S1_IF1"/>
</dbReference>
<dbReference type="InterPro" id="IPR003029">
    <property type="entry name" value="S1_domain"/>
</dbReference>
<dbReference type="InterPro" id="IPR004368">
    <property type="entry name" value="TIF_IF1"/>
</dbReference>
<dbReference type="NCBIfam" id="TIGR00008">
    <property type="entry name" value="infA"/>
    <property type="match status" value="1"/>
</dbReference>
<dbReference type="PANTHER" id="PTHR33370">
    <property type="entry name" value="TRANSLATION INITIATION FACTOR IF-1, CHLOROPLASTIC"/>
    <property type="match status" value="1"/>
</dbReference>
<dbReference type="PANTHER" id="PTHR33370:SF1">
    <property type="entry name" value="TRANSLATION INITIATION FACTOR IF-1, CHLOROPLASTIC"/>
    <property type="match status" value="1"/>
</dbReference>
<dbReference type="Pfam" id="PF01176">
    <property type="entry name" value="eIF-1a"/>
    <property type="match status" value="1"/>
</dbReference>
<dbReference type="SMART" id="SM00316">
    <property type="entry name" value="S1"/>
    <property type="match status" value="1"/>
</dbReference>
<dbReference type="SUPFAM" id="SSF50249">
    <property type="entry name" value="Nucleic acid-binding proteins"/>
    <property type="match status" value="1"/>
</dbReference>
<dbReference type="PROSITE" id="PS50832">
    <property type="entry name" value="S1_IF1_TYPE"/>
    <property type="match status" value="1"/>
</dbReference>
<organism>
    <name type="scientific">Actinobacillus pleuropneumoniae serotype 5b (strain L20)</name>
    <dbReference type="NCBI Taxonomy" id="416269"/>
    <lineage>
        <taxon>Bacteria</taxon>
        <taxon>Pseudomonadati</taxon>
        <taxon>Pseudomonadota</taxon>
        <taxon>Gammaproteobacteria</taxon>
        <taxon>Pasteurellales</taxon>
        <taxon>Pasteurellaceae</taxon>
        <taxon>Actinobacillus</taxon>
    </lineage>
</organism>
<feature type="chain" id="PRO_0000338752" description="Translation initiation factor IF-1">
    <location>
        <begin position="1"/>
        <end position="72"/>
    </location>
</feature>
<feature type="domain" description="S1-like" evidence="1">
    <location>
        <begin position="1"/>
        <end position="72"/>
    </location>
</feature>
<comment type="function">
    <text evidence="1">One of the essential components for the initiation of protein synthesis. Stabilizes the binding of IF-2 and IF-3 on the 30S subunit to which N-formylmethionyl-tRNA(fMet) subsequently binds. Helps modulate mRNA selection, yielding the 30S pre-initiation complex (PIC). Upon addition of the 50S ribosomal subunit IF-1, IF-2 and IF-3 are released leaving the mature 70S translation initiation complex.</text>
</comment>
<comment type="subunit">
    <text evidence="1">Component of the 30S ribosomal translation pre-initiation complex which assembles on the 30S ribosome in the order IF-2 and IF-3, IF-1 and N-formylmethionyl-tRNA(fMet); mRNA recruitment can occur at any time during PIC assembly.</text>
</comment>
<comment type="subcellular location">
    <subcellularLocation>
        <location evidence="1">Cytoplasm</location>
    </subcellularLocation>
</comment>
<comment type="similarity">
    <text evidence="1">Belongs to the IF-1 family.</text>
</comment>